<keyword id="KW-0238">DNA-binding</keyword>
<keyword id="KW-0426">Late protein</keyword>
<keyword id="KW-0946">Virion</keyword>
<organism>
    <name type="scientific">African swine fever virus (isolate Warthog/Namibia/Wart80/1980)</name>
    <name type="common">ASFV</name>
    <dbReference type="NCBI Taxonomy" id="561444"/>
    <lineage>
        <taxon>Viruses</taxon>
        <taxon>Varidnaviria</taxon>
        <taxon>Bamfordvirae</taxon>
        <taxon>Nucleocytoviricota</taxon>
        <taxon>Pokkesviricetes</taxon>
        <taxon>Asfuvirales</taxon>
        <taxon>Asfarviridae</taxon>
        <taxon>Asfivirus</taxon>
        <taxon>African swine fever virus</taxon>
    </lineage>
</organism>
<proteinExistence type="inferred from homology"/>
<organismHost>
    <name type="scientific">Ornithodoros</name>
    <name type="common">relapsing fever ticks</name>
    <dbReference type="NCBI Taxonomy" id="6937"/>
</organismHost>
<organismHost>
    <name type="scientific">Phacochoerus aethiopicus</name>
    <name type="common">Warthog</name>
    <dbReference type="NCBI Taxonomy" id="85517"/>
</organismHost>
<organismHost>
    <name type="scientific">Phacochoerus africanus</name>
    <name type="common">Warthog</name>
    <dbReference type="NCBI Taxonomy" id="41426"/>
</organismHost>
<organismHost>
    <name type="scientific">Potamochoerus larvatus</name>
    <name type="common">Bushpig</name>
    <dbReference type="NCBI Taxonomy" id="273792"/>
</organismHost>
<organismHost>
    <name type="scientific">Sus scrofa</name>
    <name type="common">Pig</name>
    <dbReference type="NCBI Taxonomy" id="9823"/>
</organismHost>
<gene>
    <name type="ordered locus">War-059</name>
</gene>
<name>P10_ASFWA</name>
<accession>P0C9Y0</accession>
<reference key="1">
    <citation type="submission" date="2003-03" db="EMBL/GenBank/DDBJ databases">
        <title>African swine fever virus genomes.</title>
        <authorList>
            <person name="Kutish G.F."/>
            <person name="Rock D.L."/>
        </authorList>
    </citation>
    <scope>NUCLEOTIDE SEQUENCE [LARGE SCALE GENOMIC DNA]</scope>
</reference>
<comment type="function">
    <text evidence="1">May play a role in genome packaging through direct interaction with viral DNA. Binds to ssDNA and dsDNA with the same apparent affinity in vitro.</text>
</comment>
<comment type="subcellular location">
    <subcellularLocation>
        <location evidence="1">Virion</location>
    </subcellularLocation>
    <text evidence="1">Found in association with the viral nucleoid.</text>
</comment>
<comment type="induction">
    <text evidence="1">Expressed in the early phase of the viral replicative cycle.</text>
</comment>
<comment type="similarity">
    <text evidence="3">Belongs to the asfivirus P10 family.</text>
</comment>
<dbReference type="EMBL" id="AY261366">
    <property type="status" value="NOT_ANNOTATED_CDS"/>
    <property type="molecule type" value="Genomic_DNA"/>
</dbReference>
<dbReference type="SMR" id="P0C9Y0"/>
<dbReference type="Proteomes" id="UP000000858">
    <property type="component" value="Segment"/>
</dbReference>
<dbReference type="GO" id="GO:0044423">
    <property type="term" value="C:virion component"/>
    <property type="evidence" value="ECO:0007669"/>
    <property type="project" value="UniProtKB-KW"/>
</dbReference>
<dbReference type="GO" id="GO:0003677">
    <property type="term" value="F:DNA binding"/>
    <property type="evidence" value="ECO:0007669"/>
    <property type="project" value="UniProtKB-KW"/>
</dbReference>
<sequence>MPTKAGTKSTANKKTTKGSSKSGSARGHTGKTHAPPSMHSGMLYKDMVNIARSKGIPIYQNGTRLTKSELEKKIKRSK</sequence>
<evidence type="ECO:0000250" key="1">
    <source>
        <dbReference type="UniProtKB" id="Q89769"/>
    </source>
</evidence>
<evidence type="ECO:0000256" key="2">
    <source>
        <dbReference type="SAM" id="MobiDB-lite"/>
    </source>
</evidence>
<evidence type="ECO:0000305" key="3"/>
<feature type="initiator methionine" description="Removed" evidence="1">
    <location>
        <position position="1"/>
    </location>
</feature>
<feature type="chain" id="PRO_0000373391" description="Structural DNA-binding protein p10">
    <location>
        <begin position="2"/>
        <end position="78"/>
    </location>
</feature>
<feature type="region of interest" description="Disordered" evidence="2">
    <location>
        <begin position="1"/>
        <end position="41"/>
    </location>
</feature>
<feature type="compositionally biased region" description="Low complexity" evidence="2">
    <location>
        <begin position="1"/>
        <end position="25"/>
    </location>
</feature>
<protein>
    <recommendedName>
        <fullName>Structural DNA-binding protein p10</fullName>
        <shortName>p10</shortName>
    </recommendedName>
</protein>